<organism>
    <name type="scientific">Rhodopseudomonas palustris (strain HaA2)</name>
    <dbReference type="NCBI Taxonomy" id="316058"/>
    <lineage>
        <taxon>Bacteria</taxon>
        <taxon>Pseudomonadati</taxon>
        <taxon>Pseudomonadota</taxon>
        <taxon>Alphaproteobacteria</taxon>
        <taxon>Hyphomicrobiales</taxon>
        <taxon>Nitrobacteraceae</taxon>
        <taxon>Rhodopseudomonas</taxon>
    </lineage>
</organism>
<keyword id="KW-0997">Cell inner membrane</keyword>
<keyword id="KW-1003">Cell membrane</keyword>
<keyword id="KW-0407">Ion channel</keyword>
<keyword id="KW-0406">Ion transport</keyword>
<keyword id="KW-0472">Membrane</keyword>
<keyword id="KW-1185">Reference proteome</keyword>
<keyword id="KW-0812">Transmembrane</keyword>
<keyword id="KW-1133">Transmembrane helix</keyword>
<keyword id="KW-0813">Transport</keyword>
<sequence>MFKEFREFAMKGNVVDLAVGVIIGAAFGGIVSSLVADVIMPIIGAITGGLDFSNYFTPLSKAVTANTLVEAKKQGAVLAWGSFLTLTLNFLIVAFVLFLVVRAMNRLKRKDEAAPAPPAKPTPEQELLAEIRDILKSGSRPQA</sequence>
<comment type="function">
    <text evidence="1">Channel that opens in response to stretch forces in the membrane lipid bilayer. May participate in the regulation of osmotic pressure changes within the cell.</text>
</comment>
<comment type="subunit">
    <text evidence="1">Homopentamer.</text>
</comment>
<comment type="subcellular location">
    <subcellularLocation>
        <location evidence="1">Cell inner membrane</location>
        <topology evidence="1">Multi-pass membrane protein</topology>
    </subcellularLocation>
</comment>
<comment type="similarity">
    <text evidence="1">Belongs to the MscL family.</text>
</comment>
<accession>Q2IWV4</accession>
<feature type="chain" id="PRO_1000015416" description="Large-conductance mechanosensitive channel">
    <location>
        <begin position="1"/>
        <end position="143"/>
    </location>
</feature>
<feature type="transmembrane region" description="Helical" evidence="1">
    <location>
        <begin position="19"/>
        <end position="39"/>
    </location>
</feature>
<feature type="transmembrane region" description="Helical" evidence="1">
    <location>
        <begin position="81"/>
        <end position="101"/>
    </location>
</feature>
<proteinExistence type="inferred from homology"/>
<gene>
    <name evidence="1" type="primary">mscL</name>
    <name type="ordered locus">RPB_2603</name>
</gene>
<protein>
    <recommendedName>
        <fullName evidence="1">Large-conductance mechanosensitive channel</fullName>
    </recommendedName>
</protein>
<evidence type="ECO:0000255" key="1">
    <source>
        <dbReference type="HAMAP-Rule" id="MF_00115"/>
    </source>
</evidence>
<reference key="1">
    <citation type="submission" date="2006-01" db="EMBL/GenBank/DDBJ databases">
        <title>Complete sequence of Rhodopseudomonas palustris HaA2.</title>
        <authorList>
            <consortium name="US DOE Joint Genome Institute"/>
            <person name="Copeland A."/>
            <person name="Lucas S."/>
            <person name="Lapidus A."/>
            <person name="Barry K."/>
            <person name="Detter J.C."/>
            <person name="Glavina T."/>
            <person name="Hammon N."/>
            <person name="Israni S."/>
            <person name="Pitluck S."/>
            <person name="Chain P."/>
            <person name="Malfatti S."/>
            <person name="Shin M."/>
            <person name="Vergez L."/>
            <person name="Schmutz J."/>
            <person name="Larimer F."/>
            <person name="Land M."/>
            <person name="Hauser L."/>
            <person name="Pelletier D.A."/>
            <person name="Kyrpides N."/>
            <person name="Anderson I."/>
            <person name="Oda Y."/>
            <person name="Harwood C.S."/>
            <person name="Richardson P."/>
        </authorList>
    </citation>
    <scope>NUCLEOTIDE SEQUENCE [LARGE SCALE GENOMIC DNA]</scope>
    <source>
        <strain>HaA2</strain>
    </source>
</reference>
<name>MSCL_RHOP2</name>
<dbReference type="EMBL" id="CP000250">
    <property type="protein sequence ID" value="ABD07306.1"/>
    <property type="molecule type" value="Genomic_DNA"/>
</dbReference>
<dbReference type="RefSeq" id="WP_011441491.1">
    <property type="nucleotide sequence ID" value="NC_007778.1"/>
</dbReference>
<dbReference type="SMR" id="Q2IWV4"/>
<dbReference type="STRING" id="316058.RPB_2603"/>
<dbReference type="KEGG" id="rpb:RPB_2603"/>
<dbReference type="eggNOG" id="COG1970">
    <property type="taxonomic scope" value="Bacteria"/>
</dbReference>
<dbReference type="HOGENOM" id="CLU_095787_0_1_5"/>
<dbReference type="OrthoDB" id="9810350at2"/>
<dbReference type="Proteomes" id="UP000008809">
    <property type="component" value="Chromosome"/>
</dbReference>
<dbReference type="GO" id="GO:0005886">
    <property type="term" value="C:plasma membrane"/>
    <property type="evidence" value="ECO:0007669"/>
    <property type="project" value="UniProtKB-SubCell"/>
</dbReference>
<dbReference type="GO" id="GO:0008381">
    <property type="term" value="F:mechanosensitive monoatomic ion channel activity"/>
    <property type="evidence" value="ECO:0007669"/>
    <property type="project" value="UniProtKB-UniRule"/>
</dbReference>
<dbReference type="FunFam" id="1.10.1200.120:FF:000001">
    <property type="entry name" value="Large-conductance mechanosensitive channel"/>
    <property type="match status" value="1"/>
</dbReference>
<dbReference type="Gene3D" id="1.10.1200.120">
    <property type="entry name" value="Large-conductance mechanosensitive channel, MscL, domain 1"/>
    <property type="match status" value="1"/>
</dbReference>
<dbReference type="HAMAP" id="MF_00115">
    <property type="entry name" value="MscL"/>
    <property type="match status" value="1"/>
</dbReference>
<dbReference type="InterPro" id="IPR019823">
    <property type="entry name" value="Mechanosensitive_channel_CS"/>
</dbReference>
<dbReference type="InterPro" id="IPR001185">
    <property type="entry name" value="MS_channel"/>
</dbReference>
<dbReference type="InterPro" id="IPR037673">
    <property type="entry name" value="MSC/AndL"/>
</dbReference>
<dbReference type="InterPro" id="IPR036019">
    <property type="entry name" value="MscL_channel"/>
</dbReference>
<dbReference type="NCBIfam" id="TIGR00220">
    <property type="entry name" value="mscL"/>
    <property type="match status" value="1"/>
</dbReference>
<dbReference type="NCBIfam" id="NF001843">
    <property type="entry name" value="PRK00567.1-4"/>
    <property type="match status" value="1"/>
</dbReference>
<dbReference type="NCBIfam" id="NF010557">
    <property type="entry name" value="PRK13952.1"/>
    <property type="match status" value="1"/>
</dbReference>
<dbReference type="PANTHER" id="PTHR30266:SF2">
    <property type="entry name" value="LARGE-CONDUCTANCE MECHANOSENSITIVE CHANNEL"/>
    <property type="match status" value="1"/>
</dbReference>
<dbReference type="PANTHER" id="PTHR30266">
    <property type="entry name" value="MECHANOSENSITIVE CHANNEL MSCL"/>
    <property type="match status" value="1"/>
</dbReference>
<dbReference type="Pfam" id="PF01741">
    <property type="entry name" value="MscL"/>
    <property type="match status" value="1"/>
</dbReference>
<dbReference type="PRINTS" id="PR01264">
    <property type="entry name" value="MECHCHANNEL"/>
</dbReference>
<dbReference type="SUPFAM" id="SSF81330">
    <property type="entry name" value="Gated mechanosensitive channel"/>
    <property type="match status" value="1"/>
</dbReference>
<dbReference type="PROSITE" id="PS01327">
    <property type="entry name" value="MSCL"/>
    <property type="match status" value="1"/>
</dbReference>